<organism>
    <name type="scientific">Cryptococcus neoformans var. neoformans serotype D (strain JEC21 / ATCC MYA-565)</name>
    <name type="common">Filobasidiella neoformans</name>
    <dbReference type="NCBI Taxonomy" id="214684"/>
    <lineage>
        <taxon>Eukaryota</taxon>
        <taxon>Fungi</taxon>
        <taxon>Dikarya</taxon>
        <taxon>Basidiomycota</taxon>
        <taxon>Agaricomycotina</taxon>
        <taxon>Tremellomycetes</taxon>
        <taxon>Tremellales</taxon>
        <taxon>Cryptococcaceae</taxon>
        <taxon>Cryptococcus</taxon>
        <taxon>Cryptococcus neoformans species complex</taxon>
    </lineage>
</organism>
<sequence>MPPTALPPLRPPAQPYDSYSSSLSPSSPRFHPASAPHGRRAPSPSRLESLLDAPHAPARSPSRKIRSALSRHIRPHLTPRTLTPLLLWTLALWLVHHFLFPFSSPLAALSRPKAEQHFLSTTFPPPPQRLGDDRLDSVDPRWRAFHPLPPPEPPFPRLRPTRFLPPQCLEQWFADGETLCGAKEMGEEETLDATWLWVNGSDHRWRDSMAEWREKENVNSPERHFREQNELVHSMRSVLDALPGHLRTFHLILADYPFNYPEDLDLVPPSIIPDLEVAASKGGQGRRHPRELARAPASVSNLTERLTPESISPSLARHLQSEWRILQTPTWLDFSRRDPSDPSHPFHPYSVSKAGEMRQHYAEASYPTLRYASHWEVFHIPSVDRDGREELMGEREWRENEWKKKALPSFNSMAIESRIGWLPGLADAIIALNDDFFLLRPHAVSDFHSPLYGSVIRFEHSYNQQVKPDVEKNHINDPGEMGGLYHANALLSRRFPHRLRPYFAHVPKVITRGLHHEASLMFQEALTLSSTRKFREMKIGEGDVQMQWLLTSLRVERWREALLWTWVVANMGTLSGSHDRWDSDTRSAIKHLFGFTEDDDDVVKIEVHRGERWTLEPGRMQKVFHQAGWEAPKATEFLFSSMDGIMPPLLRSGEDPSQNDRCIIDLNRCFGVFWTRQEDVLSADMMKRLTFQYPECGDCMIMALVTASGTLGLNAFFPPKETTITAPELGPGDAYPKYLPPPHLPLTPTWHEADYSLSNILSTTALPGEQVDIRQYCMRLLSRYLYLDAKSVSHFHMMKSAEHAKRVFKMIQDNPKVSILGMNDDIESDYDEVKRLMNEWFEMRWPRKAVWERDWDPVKDRYHD</sequence>
<comment type="function">
    <text evidence="1">Xylosylphosphotransferase that is specific for UDP-xylose as a donor and mannose as an acceptor to form a xylose-alpha-1-phosphate-6-mannose linkage. Functions in the O-glycosylation of proteins en route through the secretory pathway (By similarity).</text>
</comment>
<comment type="catalytic activity">
    <reaction>
        <text>3-alpha-D-mannopyranosyl-alpha-D-mannopyranose + UDP-alpha-D-xylose = 3-O-(6-O-alpha-D-xylosylphospho-alpha-D-mannopyranosyl)-alpha-D-mannopyranose + UMP + H(+)</text>
        <dbReference type="Rhea" id="RHEA:28262"/>
        <dbReference type="ChEBI" id="CHEBI:15378"/>
        <dbReference type="ChEBI" id="CHEBI:57632"/>
        <dbReference type="ChEBI" id="CHEBI:57865"/>
        <dbReference type="ChEBI" id="CHEBI:61663"/>
        <dbReference type="ChEBI" id="CHEBI:61665"/>
        <dbReference type="EC" id="2.7.8.32"/>
    </reaction>
</comment>
<comment type="cofactor">
    <cofactor evidence="1">
        <name>Mn(2+)</name>
        <dbReference type="ChEBI" id="CHEBI:29035"/>
    </cofactor>
</comment>
<comment type="subcellular location">
    <subcellularLocation>
        <location evidence="1">Golgi apparatus membrane</location>
        <topology evidence="1">Single-pass type I membrane protein</topology>
    </subcellularLocation>
</comment>
<comment type="similarity">
    <text evidence="4">Belongs to the XPT1 family.</text>
</comment>
<evidence type="ECO:0000250" key="1"/>
<evidence type="ECO:0000255" key="2"/>
<evidence type="ECO:0000256" key="3">
    <source>
        <dbReference type="SAM" id="MobiDB-lite"/>
    </source>
</evidence>
<evidence type="ECO:0000305" key="4"/>
<proteinExistence type="inferred from homology"/>
<accession>Q5KA65</accession>
<accession>Q55LC0</accession>
<reference key="1">
    <citation type="journal article" date="2005" name="Science">
        <title>The genome of the basidiomycetous yeast and human pathogen Cryptococcus neoformans.</title>
        <authorList>
            <person name="Loftus B.J."/>
            <person name="Fung E."/>
            <person name="Roncaglia P."/>
            <person name="Rowley D."/>
            <person name="Amedeo P."/>
            <person name="Bruno D."/>
            <person name="Vamathevan J."/>
            <person name="Miranda M."/>
            <person name="Anderson I.J."/>
            <person name="Fraser J.A."/>
            <person name="Allen J.E."/>
            <person name="Bosdet I.E."/>
            <person name="Brent M.R."/>
            <person name="Chiu R."/>
            <person name="Doering T.L."/>
            <person name="Donlin M.J."/>
            <person name="D'Souza C.A."/>
            <person name="Fox D.S."/>
            <person name="Grinberg V."/>
            <person name="Fu J."/>
            <person name="Fukushima M."/>
            <person name="Haas B.J."/>
            <person name="Huang J.C."/>
            <person name="Janbon G."/>
            <person name="Jones S.J.M."/>
            <person name="Koo H.L."/>
            <person name="Krzywinski M.I."/>
            <person name="Kwon-Chung K.J."/>
            <person name="Lengeler K.B."/>
            <person name="Maiti R."/>
            <person name="Marra M.A."/>
            <person name="Marra R.E."/>
            <person name="Mathewson C.A."/>
            <person name="Mitchell T.G."/>
            <person name="Pertea M."/>
            <person name="Riggs F.R."/>
            <person name="Salzberg S.L."/>
            <person name="Schein J.E."/>
            <person name="Shvartsbeyn A."/>
            <person name="Shin H."/>
            <person name="Shumway M."/>
            <person name="Specht C.A."/>
            <person name="Suh B.B."/>
            <person name="Tenney A."/>
            <person name="Utterback T.R."/>
            <person name="Wickes B.L."/>
            <person name="Wortman J.R."/>
            <person name="Wye N.H."/>
            <person name="Kronstad J.W."/>
            <person name="Lodge J.K."/>
            <person name="Heitman J."/>
            <person name="Davis R.W."/>
            <person name="Fraser C.M."/>
            <person name="Hyman R.W."/>
        </authorList>
    </citation>
    <scope>NUCLEOTIDE SEQUENCE [LARGE SCALE GENOMIC DNA]</scope>
    <source>
        <strain>JEC21 / ATCC MYA-565</strain>
    </source>
</reference>
<name>XPT1_CRYNJ</name>
<keyword id="KW-0119">Carbohydrate metabolism</keyword>
<keyword id="KW-0325">Glycoprotein</keyword>
<keyword id="KW-0328">Glycosyltransferase</keyword>
<keyword id="KW-0333">Golgi apparatus</keyword>
<keyword id="KW-0464">Manganese</keyword>
<keyword id="KW-0472">Membrane</keyword>
<keyword id="KW-1185">Reference proteome</keyword>
<keyword id="KW-0808">Transferase</keyword>
<keyword id="KW-0812">Transmembrane</keyword>
<keyword id="KW-1133">Transmembrane helix</keyword>
<keyword id="KW-0859">Xylose metabolism</keyword>
<gene>
    <name type="primary">XPT1</name>
    <name type="ordered locus">CNJ02890</name>
</gene>
<feature type="chain" id="PRO_0000418545" description="3-O-alpha-D-mannopyranosyl-alpha-D-mannopyranose xylosylphosphotransferase">
    <location>
        <begin position="1"/>
        <end position="864"/>
    </location>
</feature>
<feature type="topological domain" description="Cytoplasmic" evidence="2">
    <location>
        <begin position="1"/>
        <end position="81"/>
    </location>
</feature>
<feature type="transmembrane region" description="Helical" evidence="2">
    <location>
        <begin position="82"/>
        <end position="102"/>
    </location>
</feature>
<feature type="topological domain" description="Lumenal" evidence="2">
    <location>
        <begin position="103"/>
        <end position="864"/>
    </location>
</feature>
<feature type="region of interest" description="Disordered" evidence="3">
    <location>
        <begin position="1"/>
        <end position="47"/>
    </location>
</feature>
<feature type="compositionally biased region" description="Pro residues" evidence="3">
    <location>
        <begin position="1"/>
        <end position="14"/>
    </location>
</feature>
<feature type="compositionally biased region" description="Low complexity" evidence="3">
    <location>
        <begin position="15"/>
        <end position="28"/>
    </location>
</feature>
<feature type="glycosylation site" description="N-linked (GlcNAc...) asparagine" evidence="2">
    <location>
        <position position="199"/>
    </location>
</feature>
<feature type="glycosylation site" description="N-linked (GlcNAc...) asparagine" evidence="2">
    <location>
        <position position="301"/>
    </location>
</feature>
<protein>
    <recommendedName>
        <fullName>3-O-alpha-D-mannopyranosyl-alpha-D-mannopyranose xylosylphosphotransferase</fullName>
        <ecNumber>2.7.8.32</ecNumber>
    </recommendedName>
    <alternativeName>
        <fullName>Xylosylphosphotransferase 1</fullName>
    </alternativeName>
</protein>
<dbReference type="EC" id="2.7.8.32"/>
<dbReference type="EMBL" id="AE017350">
    <property type="protein sequence ID" value="AAW46052.1"/>
    <property type="molecule type" value="Genomic_DNA"/>
</dbReference>
<dbReference type="RefSeq" id="XP_567569.1">
    <property type="nucleotide sequence ID" value="XM_567569.1"/>
</dbReference>
<dbReference type="STRING" id="214684.Q5KA65"/>
<dbReference type="GlyCosmos" id="Q5KA65">
    <property type="glycosylation" value="2 sites, No reported glycans"/>
</dbReference>
<dbReference type="PaxDb" id="214684-Q5KA65"/>
<dbReference type="EnsemblFungi" id="AAW46052">
    <property type="protein sequence ID" value="AAW46052"/>
    <property type="gene ID" value="CNJ02890"/>
</dbReference>
<dbReference type="GeneID" id="3254180"/>
<dbReference type="KEGG" id="cne:CNJ02890"/>
<dbReference type="VEuPathDB" id="FungiDB:CNJ02890"/>
<dbReference type="eggNOG" id="ENOG502QV1P">
    <property type="taxonomic scope" value="Eukaryota"/>
</dbReference>
<dbReference type="HOGENOM" id="CLU_005484_2_0_1"/>
<dbReference type="InParanoid" id="Q5KA65"/>
<dbReference type="OMA" id="HAEIFQP"/>
<dbReference type="OrthoDB" id="263283at2759"/>
<dbReference type="Proteomes" id="UP000002149">
    <property type="component" value="Chromosome 10"/>
</dbReference>
<dbReference type="GO" id="GO:0005794">
    <property type="term" value="C:Golgi apparatus"/>
    <property type="evidence" value="ECO:0000318"/>
    <property type="project" value="GO_Central"/>
</dbReference>
<dbReference type="GO" id="GO:0000139">
    <property type="term" value="C:Golgi membrane"/>
    <property type="evidence" value="ECO:0007669"/>
    <property type="project" value="UniProtKB-SubCell"/>
</dbReference>
<dbReference type="GO" id="GO:0016757">
    <property type="term" value="F:glycosyltransferase activity"/>
    <property type="evidence" value="ECO:0007669"/>
    <property type="project" value="UniProtKB-KW"/>
</dbReference>
<dbReference type="GO" id="GO:0003976">
    <property type="term" value="F:UDP-N-acetylglucosamine-lysosomal-enzyme N-acetylglucosaminephosphotransferase activity"/>
    <property type="evidence" value="ECO:0000318"/>
    <property type="project" value="GO_Central"/>
</dbReference>
<dbReference type="GO" id="GO:0042732">
    <property type="term" value="P:D-xylose metabolic process"/>
    <property type="evidence" value="ECO:0007669"/>
    <property type="project" value="UniProtKB-KW"/>
</dbReference>
<dbReference type="InterPro" id="IPR047141">
    <property type="entry name" value="Stealth"/>
</dbReference>
<dbReference type="InterPro" id="IPR031357">
    <property type="entry name" value="Stealth_CR3"/>
</dbReference>
<dbReference type="InterPro" id="IPR031356">
    <property type="entry name" value="Stealth_CR4"/>
</dbReference>
<dbReference type="PANTHER" id="PTHR24045">
    <property type="match status" value="1"/>
</dbReference>
<dbReference type="PANTHER" id="PTHR24045:SF0">
    <property type="entry name" value="N-ACETYLGLUCOSAMINE-1-PHOSPHOTRANSFERASE SUBUNITS ALPHA_BETA"/>
    <property type="match status" value="1"/>
</dbReference>
<dbReference type="Pfam" id="PF17102">
    <property type="entry name" value="Stealth_CR3"/>
    <property type="match status" value="1"/>
</dbReference>
<dbReference type="Pfam" id="PF17103">
    <property type="entry name" value="Stealth_CR4"/>
    <property type="match status" value="1"/>
</dbReference>